<dbReference type="EC" id="2.7.7.6" evidence="1"/>
<dbReference type="EMBL" id="DQ422812">
    <property type="protein sequence ID" value="ABD62241.2"/>
    <property type="molecule type" value="Genomic_DNA"/>
</dbReference>
<dbReference type="RefSeq" id="YP_001019103.1">
    <property type="nucleotide sequence ID" value="NC_008822.1"/>
</dbReference>
<dbReference type="SMR" id="Q19V99"/>
<dbReference type="GeneID" id="4783224"/>
<dbReference type="GO" id="GO:0009507">
    <property type="term" value="C:chloroplast"/>
    <property type="evidence" value="ECO:0007669"/>
    <property type="project" value="UniProtKB-SubCell"/>
</dbReference>
<dbReference type="GO" id="GO:0000428">
    <property type="term" value="C:DNA-directed RNA polymerase complex"/>
    <property type="evidence" value="ECO:0007669"/>
    <property type="project" value="UniProtKB-KW"/>
</dbReference>
<dbReference type="GO" id="GO:0005739">
    <property type="term" value="C:mitochondrion"/>
    <property type="evidence" value="ECO:0007669"/>
    <property type="project" value="GOC"/>
</dbReference>
<dbReference type="GO" id="GO:0003677">
    <property type="term" value="F:DNA binding"/>
    <property type="evidence" value="ECO:0007669"/>
    <property type="project" value="UniProtKB-UniRule"/>
</dbReference>
<dbReference type="GO" id="GO:0003899">
    <property type="term" value="F:DNA-directed RNA polymerase activity"/>
    <property type="evidence" value="ECO:0007669"/>
    <property type="project" value="UniProtKB-UniRule"/>
</dbReference>
<dbReference type="GO" id="GO:0000287">
    <property type="term" value="F:magnesium ion binding"/>
    <property type="evidence" value="ECO:0007669"/>
    <property type="project" value="UniProtKB-UniRule"/>
</dbReference>
<dbReference type="GO" id="GO:0008270">
    <property type="term" value="F:zinc ion binding"/>
    <property type="evidence" value="ECO:0007669"/>
    <property type="project" value="UniProtKB-UniRule"/>
</dbReference>
<dbReference type="GO" id="GO:0006351">
    <property type="term" value="P:DNA-templated transcription"/>
    <property type="evidence" value="ECO:0007669"/>
    <property type="project" value="UniProtKB-UniRule"/>
</dbReference>
<dbReference type="Gene3D" id="1.10.40.90">
    <property type="match status" value="1"/>
</dbReference>
<dbReference type="Gene3D" id="2.40.40.20">
    <property type="match status" value="1"/>
</dbReference>
<dbReference type="Gene3D" id="4.10.860.120">
    <property type="entry name" value="RNA polymerase II, clamp domain"/>
    <property type="match status" value="1"/>
</dbReference>
<dbReference type="Gene3D" id="1.10.274.100">
    <property type="entry name" value="RNA polymerase Rpb1, domain 3"/>
    <property type="match status" value="1"/>
</dbReference>
<dbReference type="HAMAP" id="MF_01323">
    <property type="entry name" value="RNApol_bact_RpoC1"/>
    <property type="match status" value="1"/>
</dbReference>
<dbReference type="InterPro" id="IPR045867">
    <property type="entry name" value="DNA-dir_RpoC_beta_prime"/>
</dbReference>
<dbReference type="InterPro" id="IPR000722">
    <property type="entry name" value="RNA_pol_asu"/>
</dbReference>
<dbReference type="InterPro" id="IPR006592">
    <property type="entry name" value="RNA_pol_N"/>
</dbReference>
<dbReference type="InterPro" id="IPR007080">
    <property type="entry name" value="RNA_pol_Rpb1_1"/>
</dbReference>
<dbReference type="InterPro" id="IPR007066">
    <property type="entry name" value="RNA_pol_Rpb1_3"/>
</dbReference>
<dbReference type="InterPro" id="IPR042102">
    <property type="entry name" value="RNA_pol_Rpb1_3_sf"/>
</dbReference>
<dbReference type="InterPro" id="IPR044893">
    <property type="entry name" value="RNA_pol_Rpb1_clamp_domain"/>
</dbReference>
<dbReference type="InterPro" id="IPR034678">
    <property type="entry name" value="RNApol_RpoC1"/>
</dbReference>
<dbReference type="PANTHER" id="PTHR19376">
    <property type="entry name" value="DNA-DIRECTED RNA POLYMERASE"/>
    <property type="match status" value="1"/>
</dbReference>
<dbReference type="PANTHER" id="PTHR19376:SF54">
    <property type="entry name" value="DNA-DIRECTED RNA POLYMERASE SUBUNIT BETA"/>
    <property type="match status" value="1"/>
</dbReference>
<dbReference type="Pfam" id="PF04997">
    <property type="entry name" value="RNA_pol_Rpb1_1"/>
    <property type="match status" value="1"/>
</dbReference>
<dbReference type="Pfam" id="PF00623">
    <property type="entry name" value="RNA_pol_Rpb1_2"/>
    <property type="match status" value="1"/>
</dbReference>
<dbReference type="Pfam" id="PF04983">
    <property type="entry name" value="RNA_pol_Rpb1_3"/>
    <property type="match status" value="1"/>
</dbReference>
<dbReference type="SMART" id="SM00663">
    <property type="entry name" value="RPOLA_N"/>
    <property type="match status" value="1"/>
</dbReference>
<dbReference type="SUPFAM" id="SSF64484">
    <property type="entry name" value="beta and beta-prime subunits of DNA dependent RNA-polymerase"/>
    <property type="match status" value="1"/>
</dbReference>
<feature type="chain" id="PRO_0000353482" description="DNA-directed RNA polymerase subunit beta'">
    <location>
        <begin position="1"/>
        <end position="717"/>
    </location>
</feature>
<feature type="binding site" evidence="1">
    <location>
        <position position="71"/>
    </location>
    <ligand>
        <name>Zn(2+)</name>
        <dbReference type="ChEBI" id="CHEBI:29105"/>
    </ligand>
</feature>
<feature type="binding site" evidence="1">
    <location>
        <position position="73"/>
    </location>
    <ligand>
        <name>Zn(2+)</name>
        <dbReference type="ChEBI" id="CHEBI:29105"/>
    </ligand>
</feature>
<feature type="binding site" evidence="1">
    <location>
        <position position="91"/>
    </location>
    <ligand>
        <name>Zn(2+)</name>
        <dbReference type="ChEBI" id="CHEBI:29105"/>
    </ligand>
</feature>
<feature type="binding site" evidence="1">
    <location>
        <position position="94"/>
    </location>
    <ligand>
        <name>Zn(2+)</name>
        <dbReference type="ChEBI" id="CHEBI:29105"/>
    </ligand>
</feature>
<feature type="binding site" evidence="1">
    <location>
        <position position="481"/>
    </location>
    <ligand>
        <name>Mg(2+)</name>
        <dbReference type="ChEBI" id="CHEBI:18420"/>
    </ligand>
</feature>
<feature type="binding site" evidence="1">
    <location>
        <position position="483"/>
    </location>
    <ligand>
        <name>Mg(2+)</name>
        <dbReference type="ChEBI" id="CHEBI:18420"/>
    </ligand>
</feature>
<feature type="binding site" evidence="1">
    <location>
        <position position="485"/>
    </location>
    <ligand>
        <name>Mg(2+)</name>
        <dbReference type="ChEBI" id="CHEBI:18420"/>
    </ligand>
</feature>
<reference key="1">
    <citation type="journal article" date="2007" name="BMC Biol.">
        <title>A clade uniting the green algae Mesostigma viride and Chlorokybus atmophyticus represents the deepest branch of the Streptophyta in chloroplast genome-based phylogenies.</title>
        <authorList>
            <person name="Lemieux C."/>
            <person name="Otis C."/>
            <person name="Turmel M."/>
        </authorList>
    </citation>
    <scope>NUCLEOTIDE SEQUENCE [LARGE SCALE GENOMIC DNA]</scope>
    <source>
        <strain>SAG 48.80</strain>
    </source>
</reference>
<organism>
    <name type="scientific">Chlorokybus atmophyticus</name>
    <name type="common">Soil alga</name>
    <dbReference type="NCBI Taxonomy" id="3144"/>
    <lineage>
        <taxon>Eukaryota</taxon>
        <taxon>Viridiplantae</taxon>
        <taxon>Streptophyta</taxon>
        <taxon>Chlorokybophyceae</taxon>
        <taxon>Chlorokybales</taxon>
        <taxon>Chlorokybaceae</taxon>
        <taxon>Chlorokybus</taxon>
    </lineage>
</organism>
<protein>
    <recommendedName>
        <fullName evidence="1">DNA-directed RNA polymerase subunit beta'</fullName>
        <ecNumber evidence="1">2.7.7.6</ecNumber>
    </recommendedName>
    <alternativeName>
        <fullName evidence="1">PEP</fullName>
    </alternativeName>
    <alternativeName>
        <fullName evidence="1">Plastid-encoded RNA polymerase subunit beta'</fullName>
        <shortName evidence="1">RNA polymerase subunit beta'</shortName>
    </alternativeName>
</protein>
<sequence>MIPMKRVHFEYIQIHLASPERIRKWGERTLSNGEVVGEVTRSETINYRTLKPEMDGLFCERIFGPVKDWECHCGQYKRVRYNTDLKNDIVCERCGVEVTESGVRRHRMGHIKLAAPVTHVWYLKGIPSYISIILGLPRKEVEGIVYYNNYETTGSKEIARFIKDKQLLERKDRKIIDQSFFSLDEESELFSGAQAIQTMLSSLDLKTTAQNIREELAATEDWSEEEEDRLRKKRNKLIKRLKIINHFLATGAKPEWMILSILPVLPPDLRPMVQLDGGQFATSDLNDLYRRVINRNNRLSKLNTMLAPEIVVRSEKRMLQEAVDALIDNGKRGRQALVGSNKIPLKSLSDIIKGKQGRFRQNLLGKRVDYSGRSVIVVGPQLKLHQCGLPKEMAIELFQPFVIHNLINQGLANNIKAAKRKLQNNDPSIWEVLKQVIQGHPVLLNRAPTLHRLGIQAFEPILVEGRAIQLHPLVCPAFNADFDGDQMAVHIPLSLEAQTEARLLMLASSNLLSPATGQPIIAPSQDMILGCYYLTTENPKFQIERGHYFSTLKDAVMAYEQKRIHLHSYIWVRFQGRIDTKSTQEEPIEIRIEESGFCSTIYRRYQYRSFKNKKELKTAATPFYNSENAYLMMNKKKMSIPQKPSLESNNLSLTATATATATATATATATATATATATATATNANDHYFVQYVRTTPGRILFNQVIHECLELNEIHP</sequence>
<geneLocation type="chloroplast"/>
<name>RPOC1_CHLAT</name>
<accession>Q19V99</accession>
<proteinExistence type="inferred from homology"/>
<evidence type="ECO:0000255" key="1">
    <source>
        <dbReference type="HAMAP-Rule" id="MF_01323"/>
    </source>
</evidence>
<comment type="function">
    <text evidence="1">DNA-dependent RNA polymerase catalyzes the transcription of DNA into RNA using the four ribonucleoside triphosphates as substrates.</text>
</comment>
<comment type="catalytic activity">
    <reaction evidence="1">
        <text>RNA(n) + a ribonucleoside 5'-triphosphate = RNA(n+1) + diphosphate</text>
        <dbReference type="Rhea" id="RHEA:21248"/>
        <dbReference type="Rhea" id="RHEA-COMP:14527"/>
        <dbReference type="Rhea" id="RHEA-COMP:17342"/>
        <dbReference type="ChEBI" id="CHEBI:33019"/>
        <dbReference type="ChEBI" id="CHEBI:61557"/>
        <dbReference type="ChEBI" id="CHEBI:140395"/>
        <dbReference type="EC" id="2.7.7.6"/>
    </reaction>
</comment>
<comment type="cofactor">
    <cofactor evidence="1">
        <name>Mg(2+)</name>
        <dbReference type="ChEBI" id="CHEBI:18420"/>
    </cofactor>
    <text evidence="1">Binds 1 Mg(2+) ion per subunit.</text>
</comment>
<comment type="cofactor">
    <cofactor evidence="1">
        <name>Zn(2+)</name>
        <dbReference type="ChEBI" id="CHEBI:29105"/>
    </cofactor>
    <text evidence="1">Binds 1 Zn(2+) ion per subunit.</text>
</comment>
<comment type="subunit">
    <text evidence="1">In plastids the minimal PEP RNA polymerase catalytic core is composed of four subunits: alpha, beta, beta', and beta''. When a (nuclear-encoded) sigma factor is associated with the core the holoenzyme is formed, which can initiate transcription.</text>
</comment>
<comment type="subcellular location">
    <subcellularLocation>
        <location evidence="1">Plastid</location>
        <location evidence="1">Chloroplast</location>
    </subcellularLocation>
</comment>
<comment type="similarity">
    <text evidence="1">Belongs to the RNA polymerase beta' chain family. RpoC1 subfamily.</text>
</comment>
<gene>
    <name evidence="1" type="primary">rpoC1</name>
</gene>
<keyword id="KW-0150">Chloroplast</keyword>
<keyword id="KW-0240">DNA-directed RNA polymerase</keyword>
<keyword id="KW-0460">Magnesium</keyword>
<keyword id="KW-0479">Metal-binding</keyword>
<keyword id="KW-0548">Nucleotidyltransferase</keyword>
<keyword id="KW-0934">Plastid</keyword>
<keyword id="KW-0804">Transcription</keyword>
<keyword id="KW-0808">Transferase</keyword>
<keyword id="KW-0862">Zinc</keyword>